<dbReference type="EC" id="2.4.2.-" evidence="1"/>
<dbReference type="EMBL" id="AM286415">
    <property type="protein sequence ID" value="CAL12186.1"/>
    <property type="molecule type" value="Genomic_DNA"/>
</dbReference>
<dbReference type="RefSeq" id="WP_005169553.1">
    <property type="nucleotide sequence ID" value="NC_008800.1"/>
</dbReference>
<dbReference type="RefSeq" id="YP_001006356.1">
    <property type="nucleotide sequence ID" value="NC_008800.1"/>
</dbReference>
<dbReference type="SMR" id="A1JNH0"/>
<dbReference type="KEGG" id="yen:YE2116"/>
<dbReference type="PATRIC" id="fig|393305.7.peg.2278"/>
<dbReference type="eggNOG" id="COG5654">
    <property type="taxonomic scope" value="Bacteria"/>
</dbReference>
<dbReference type="HOGENOM" id="CLU_133611_0_1_6"/>
<dbReference type="OrthoDB" id="9789501at2"/>
<dbReference type="Proteomes" id="UP000000642">
    <property type="component" value="Chromosome"/>
</dbReference>
<dbReference type="GO" id="GO:0016779">
    <property type="term" value="F:nucleotidyltransferase activity"/>
    <property type="evidence" value="ECO:0007669"/>
    <property type="project" value="UniProtKB-KW"/>
</dbReference>
<dbReference type="InterPro" id="IPR014914">
    <property type="entry name" value="RES_dom"/>
</dbReference>
<dbReference type="Pfam" id="PF08808">
    <property type="entry name" value="RES"/>
    <property type="match status" value="1"/>
</dbReference>
<dbReference type="SMART" id="SM00953">
    <property type="entry name" value="RES"/>
    <property type="match status" value="1"/>
</dbReference>
<accession>A1JNH0</accession>
<comment type="function">
    <text evidence="2 4">Toxic component of a type II toxin-antitoxin (TA) system. Expression in E.coli inhibits cell growth; bacteriostasis is neutralized by expression of cognate antitoxin Xre (PubMed:30315706). Probably depletes intracellular NAD(+) (By similarity).</text>
</comment>
<comment type="subunit">
    <text evidence="3">Homodimer. Forms a complex with cognate antitoxin Xre.</text>
</comment>
<comment type="similarity">
    <text evidence="6">Belongs to the MbcT/ParT/Res family.</text>
</comment>
<gene>
    <name evidence="5" type="primary">res</name>
    <name type="ordered locus">YE2116</name>
</gene>
<organism>
    <name type="scientific">Yersinia enterocolitica serotype O:8 / biotype 1B (strain NCTC 13174 / 8081)</name>
    <dbReference type="NCBI Taxonomy" id="393305"/>
    <lineage>
        <taxon>Bacteria</taxon>
        <taxon>Pseudomonadati</taxon>
        <taxon>Pseudomonadota</taxon>
        <taxon>Gammaproteobacteria</taxon>
        <taxon>Enterobacterales</taxon>
        <taxon>Yersiniaceae</taxon>
        <taxon>Yersinia</taxon>
    </lineage>
</organism>
<proteinExistence type="evidence at protein level"/>
<keyword id="KW-0520">NAD</keyword>
<keyword id="KW-0548">Nucleotidyltransferase</keyword>
<keyword id="KW-1277">Toxin-antitoxin system</keyword>
<keyword id="KW-0808">Transferase</keyword>
<name>RES_YERE8</name>
<feature type="chain" id="PRO_0000448608" description="Toxin Res">
    <location>
        <begin position="1"/>
        <end position="152"/>
    </location>
</feature>
<reference key="1">
    <citation type="journal article" date="2006" name="PLoS Genet.">
        <title>The complete genome sequence and comparative genome analysis of the high pathogenicity Yersinia enterocolitica strain 8081.</title>
        <authorList>
            <person name="Thomson N.R."/>
            <person name="Howard S."/>
            <person name="Wren B.W."/>
            <person name="Holden M.T.G."/>
            <person name="Crossman L."/>
            <person name="Challis G.L."/>
            <person name="Churcher C."/>
            <person name="Mungall K."/>
            <person name="Brooks K."/>
            <person name="Chillingworth T."/>
            <person name="Feltwell T."/>
            <person name="Abdellah Z."/>
            <person name="Hauser H."/>
            <person name="Jagels K."/>
            <person name="Maddison M."/>
            <person name="Moule S."/>
            <person name="Sanders M."/>
            <person name="Whitehead S."/>
            <person name="Quail M.A."/>
            <person name="Dougan G."/>
            <person name="Parkhill J."/>
            <person name="Prentice M.B."/>
        </authorList>
    </citation>
    <scope>NUCLEOTIDE SEQUENCE [LARGE SCALE GENOMIC DNA]</scope>
    <source>
        <strain>NCTC 13174 / 8081</strain>
    </source>
</reference>
<reference key="2">
    <citation type="journal article" date="2019" name="Mol. Microbiol.">
        <title>The RES domain toxins of RES-Xre toxin-antitoxin modules induce cell stasis by degrading NAD+.</title>
        <authorList>
            <person name="Skjerning R.B."/>
            <person name="Senissar M."/>
            <person name="Winther K.S."/>
            <person name="Gerdes K."/>
            <person name="Brodersen D.E."/>
        </authorList>
    </citation>
    <scope>FUNCTION AS A TOXIN</scope>
    <scope>EXPRESSION IN E.COLI</scope>
    <source>
        <strain>NCTC 13174 / 8081</strain>
    </source>
</reference>
<protein>
    <recommendedName>
        <fullName evidence="7">Toxin Res</fullName>
        <ecNumber evidence="1">2.4.2.-</ecNumber>
    </recommendedName>
</protein>
<sequence length="152" mass="17223">MMLYRIVMRRYLASTWTGYGAETYGGRWNHKGHAAIYLASSVSLAMLETLVHIQDSSTLSEFELFQIEIEDSNIMLLQPQDWPTNWRSDPAPATTMDIGTEWLESESSLGLLVPSTLVPTENNLLLNPRHKSFQTCLSSVQPLSFAFDPRLK</sequence>
<evidence type="ECO:0000250" key="1">
    <source>
        <dbReference type="UniProtKB" id="P9WLP9"/>
    </source>
</evidence>
<evidence type="ECO:0000250" key="2">
    <source>
        <dbReference type="UniProtKB" id="Q7N4H9"/>
    </source>
</evidence>
<evidence type="ECO:0000250" key="3">
    <source>
        <dbReference type="UniProtKB" id="Q88K57"/>
    </source>
</evidence>
<evidence type="ECO:0000269" key="4">
    <source>
    </source>
</evidence>
<evidence type="ECO:0000303" key="5">
    <source>
    </source>
</evidence>
<evidence type="ECO:0000305" key="6"/>
<evidence type="ECO:0000305" key="7">
    <source>
    </source>
</evidence>